<gene>
    <name evidence="8" type="primary">Atp6ap2</name>
    <name type="synonym">Atp6ip2</name>
</gene>
<keyword id="KW-0002">3D-structure</keyword>
<keyword id="KW-1003">Cell membrane</keyword>
<keyword id="KW-0966">Cell projection</keyword>
<keyword id="KW-0165">Cleavage on pair of basic residues</keyword>
<keyword id="KW-0968">Cytoplasmic vesicle</keyword>
<keyword id="KW-0256">Endoplasmic reticulum</keyword>
<keyword id="KW-0967">Endosome</keyword>
<keyword id="KW-0458">Lysosome</keyword>
<keyword id="KW-0472">Membrane</keyword>
<keyword id="KW-0597">Phosphoprotein</keyword>
<keyword id="KW-0628">Postsynaptic cell membrane</keyword>
<keyword id="KW-0675">Receptor</keyword>
<keyword id="KW-1185">Reference proteome</keyword>
<keyword id="KW-0732">Signal</keyword>
<keyword id="KW-0770">Synapse</keyword>
<keyword id="KW-0812">Transmembrane</keyword>
<keyword id="KW-1133">Transmembrane helix</keyword>
<feature type="signal peptide" evidence="3">
    <location>
        <begin position="1"/>
        <end position="17"/>
    </location>
</feature>
<feature type="chain" id="PRO_0000022204" description="Renin receptor">
    <location>
        <begin position="18"/>
        <end position="350"/>
    </location>
</feature>
<feature type="chain" id="PRO_0000447866" description="Renin receptor extracellular fragment" evidence="7">
    <location>
        <begin position="18"/>
        <end position="276"/>
    </location>
</feature>
<feature type="chain" id="PRO_0000447867" description="Renin receptor cytoplasmic fragment" evidence="7">
    <location>
        <begin position="279"/>
        <end position="350"/>
    </location>
</feature>
<feature type="topological domain" description="Extracellular" evidence="3">
    <location>
        <begin position="18"/>
        <end position="302"/>
    </location>
</feature>
<feature type="transmembrane region" description="Helical" evidence="3">
    <location>
        <begin position="303"/>
        <end position="323"/>
    </location>
</feature>
<feature type="topological domain" description="Cytoplasmic" evidence="3">
    <location>
        <begin position="324"/>
        <end position="350"/>
    </location>
</feature>
<feature type="short sequence motif" description="Mediates retrograde transport to the ER" evidence="1">
    <location>
        <begin position="346"/>
        <end position="350"/>
    </location>
</feature>
<feature type="site" description="Cleavage; by furin-like protease" evidence="1">
    <location>
        <begin position="276"/>
        <end position="277"/>
    </location>
</feature>
<feature type="site" description="Cleavage; by furin-like protease" evidence="1">
    <location>
        <begin position="278"/>
        <end position="279"/>
    </location>
</feature>
<feature type="sequence conflict" description="In Ref. 1; BAC36365." evidence="7" ref="1">
    <original>N</original>
    <variation>K</variation>
    <location>
        <position position="157"/>
    </location>
</feature>
<feature type="sequence conflict" description="In Ref. 1; BAC36365." evidence="7" ref="1">
    <original>L</original>
    <variation>H</variation>
    <location>
        <position position="169"/>
    </location>
</feature>
<name>RENR_MOUSE</name>
<reference key="1">
    <citation type="journal article" date="2005" name="Science">
        <title>The transcriptional landscape of the mammalian genome.</title>
        <authorList>
            <person name="Carninci P."/>
            <person name="Kasukawa T."/>
            <person name="Katayama S."/>
            <person name="Gough J."/>
            <person name="Frith M.C."/>
            <person name="Maeda N."/>
            <person name="Oyama R."/>
            <person name="Ravasi T."/>
            <person name="Lenhard B."/>
            <person name="Wells C."/>
            <person name="Kodzius R."/>
            <person name="Shimokawa K."/>
            <person name="Bajic V.B."/>
            <person name="Brenner S.E."/>
            <person name="Batalov S."/>
            <person name="Forrest A.R."/>
            <person name="Zavolan M."/>
            <person name="Davis M.J."/>
            <person name="Wilming L.G."/>
            <person name="Aidinis V."/>
            <person name="Allen J.E."/>
            <person name="Ambesi-Impiombato A."/>
            <person name="Apweiler R."/>
            <person name="Aturaliya R.N."/>
            <person name="Bailey T.L."/>
            <person name="Bansal M."/>
            <person name="Baxter L."/>
            <person name="Beisel K.W."/>
            <person name="Bersano T."/>
            <person name="Bono H."/>
            <person name="Chalk A.M."/>
            <person name="Chiu K.P."/>
            <person name="Choudhary V."/>
            <person name="Christoffels A."/>
            <person name="Clutterbuck D.R."/>
            <person name="Crowe M.L."/>
            <person name="Dalla E."/>
            <person name="Dalrymple B.P."/>
            <person name="de Bono B."/>
            <person name="Della Gatta G."/>
            <person name="di Bernardo D."/>
            <person name="Down T."/>
            <person name="Engstrom P."/>
            <person name="Fagiolini M."/>
            <person name="Faulkner G."/>
            <person name="Fletcher C.F."/>
            <person name="Fukushima T."/>
            <person name="Furuno M."/>
            <person name="Futaki S."/>
            <person name="Gariboldi M."/>
            <person name="Georgii-Hemming P."/>
            <person name="Gingeras T.R."/>
            <person name="Gojobori T."/>
            <person name="Green R.E."/>
            <person name="Gustincich S."/>
            <person name="Harbers M."/>
            <person name="Hayashi Y."/>
            <person name="Hensch T.K."/>
            <person name="Hirokawa N."/>
            <person name="Hill D."/>
            <person name="Huminiecki L."/>
            <person name="Iacono M."/>
            <person name="Ikeo K."/>
            <person name="Iwama A."/>
            <person name="Ishikawa T."/>
            <person name="Jakt M."/>
            <person name="Kanapin A."/>
            <person name="Katoh M."/>
            <person name="Kawasawa Y."/>
            <person name="Kelso J."/>
            <person name="Kitamura H."/>
            <person name="Kitano H."/>
            <person name="Kollias G."/>
            <person name="Krishnan S.P."/>
            <person name="Kruger A."/>
            <person name="Kummerfeld S.K."/>
            <person name="Kurochkin I.V."/>
            <person name="Lareau L.F."/>
            <person name="Lazarevic D."/>
            <person name="Lipovich L."/>
            <person name="Liu J."/>
            <person name="Liuni S."/>
            <person name="McWilliam S."/>
            <person name="Madan Babu M."/>
            <person name="Madera M."/>
            <person name="Marchionni L."/>
            <person name="Matsuda H."/>
            <person name="Matsuzawa S."/>
            <person name="Miki H."/>
            <person name="Mignone F."/>
            <person name="Miyake S."/>
            <person name="Morris K."/>
            <person name="Mottagui-Tabar S."/>
            <person name="Mulder N."/>
            <person name="Nakano N."/>
            <person name="Nakauchi H."/>
            <person name="Ng P."/>
            <person name="Nilsson R."/>
            <person name="Nishiguchi S."/>
            <person name="Nishikawa S."/>
            <person name="Nori F."/>
            <person name="Ohara O."/>
            <person name="Okazaki Y."/>
            <person name="Orlando V."/>
            <person name="Pang K.C."/>
            <person name="Pavan W.J."/>
            <person name="Pavesi G."/>
            <person name="Pesole G."/>
            <person name="Petrovsky N."/>
            <person name="Piazza S."/>
            <person name="Reed J."/>
            <person name="Reid J.F."/>
            <person name="Ring B.Z."/>
            <person name="Ringwald M."/>
            <person name="Rost B."/>
            <person name="Ruan Y."/>
            <person name="Salzberg S.L."/>
            <person name="Sandelin A."/>
            <person name="Schneider C."/>
            <person name="Schoenbach C."/>
            <person name="Sekiguchi K."/>
            <person name="Semple C.A."/>
            <person name="Seno S."/>
            <person name="Sessa L."/>
            <person name="Sheng Y."/>
            <person name="Shibata Y."/>
            <person name="Shimada H."/>
            <person name="Shimada K."/>
            <person name="Silva D."/>
            <person name="Sinclair B."/>
            <person name="Sperling S."/>
            <person name="Stupka E."/>
            <person name="Sugiura K."/>
            <person name="Sultana R."/>
            <person name="Takenaka Y."/>
            <person name="Taki K."/>
            <person name="Tammoja K."/>
            <person name="Tan S.L."/>
            <person name="Tang S."/>
            <person name="Taylor M.S."/>
            <person name="Tegner J."/>
            <person name="Teichmann S.A."/>
            <person name="Ueda H.R."/>
            <person name="van Nimwegen E."/>
            <person name="Verardo R."/>
            <person name="Wei C.L."/>
            <person name="Yagi K."/>
            <person name="Yamanishi H."/>
            <person name="Zabarovsky E."/>
            <person name="Zhu S."/>
            <person name="Zimmer A."/>
            <person name="Hide W."/>
            <person name="Bult C."/>
            <person name="Grimmond S.M."/>
            <person name="Teasdale R.D."/>
            <person name="Liu E.T."/>
            <person name="Brusic V."/>
            <person name="Quackenbush J."/>
            <person name="Wahlestedt C."/>
            <person name="Mattick J.S."/>
            <person name="Hume D.A."/>
            <person name="Kai C."/>
            <person name="Sasaki D."/>
            <person name="Tomaru Y."/>
            <person name="Fukuda S."/>
            <person name="Kanamori-Katayama M."/>
            <person name="Suzuki M."/>
            <person name="Aoki J."/>
            <person name="Arakawa T."/>
            <person name="Iida J."/>
            <person name="Imamura K."/>
            <person name="Itoh M."/>
            <person name="Kato T."/>
            <person name="Kawaji H."/>
            <person name="Kawagashira N."/>
            <person name="Kawashima T."/>
            <person name="Kojima M."/>
            <person name="Kondo S."/>
            <person name="Konno H."/>
            <person name="Nakano K."/>
            <person name="Ninomiya N."/>
            <person name="Nishio T."/>
            <person name="Okada M."/>
            <person name="Plessy C."/>
            <person name="Shibata K."/>
            <person name="Shiraki T."/>
            <person name="Suzuki S."/>
            <person name="Tagami M."/>
            <person name="Waki K."/>
            <person name="Watahiki A."/>
            <person name="Okamura-Oho Y."/>
            <person name="Suzuki H."/>
            <person name="Kawai J."/>
            <person name="Hayashizaki Y."/>
        </authorList>
    </citation>
    <scope>NUCLEOTIDE SEQUENCE [LARGE SCALE MRNA]</scope>
    <source>
        <strain>C57BL/6J</strain>
        <tissue>Embryo</tissue>
        <tissue>Head</tissue>
    </source>
</reference>
<reference key="2">
    <citation type="journal article" date="2009" name="PLoS Biol.">
        <title>Lineage-specific biology revealed by a finished genome assembly of the mouse.</title>
        <authorList>
            <person name="Church D.M."/>
            <person name="Goodstadt L."/>
            <person name="Hillier L.W."/>
            <person name="Zody M.C."/>
            <person name="Goldstein S."/>
            <person name="She X."/>
            <person name="Bult C.J."/>
            <person name="Agarwala R."/>
            <person name="Cherry J.L."/>
            <person name="DiCuccio M."/>
            <person name="Hlavina W."/>
            <person name="Kapustin Y."/>
            <person name="Meric P."/>
            <person name="Maglott D."/>
            <person name="Birtle Z."/>
            <person name="Marques A.C."/>
            <person name="Graves T."/>
            <person name="Zhou S."/>
            <person name="Teague B."/>
            <person name="Potamousis K."/>
            <person name="Churas C."/>
            <person name="Place M."/>
            <person name="Herschleb J."/>
            <person name="Runnheim R."/>
            <person name="Forrest D."/>
            <person name="Amos-Landgraf J."/>
            <person name="Schwartz D.C."/>
            <person name="Cheng Z."/>
            <person name="Lindblad-Toh K."/>
            <person name="Eichler E.E."/>
            <person name="Ponting C.P."/>
        </authorList>
    </citation>
    <scope>NUCLEOTIDE SEQUENCE [LARGE SCALE GENOMIC DNA]</scope>
    <source>
        <strain>C57BL/6J</strain>
    </source>
</reference>
<reference key="3">
    <citation type="journal article" date="2004" name="Genome Res.">
        <title>The status, quality, and expansion of the NIH full-length cDNA project: the Mammalian Gene Collection (MGC).</title>
        <authorList>
            <consortium name="The MGC Project Team"/>
        </authorList>
    </citation>
    <scope>NUCLEOTIDE SEQUENCE [LARGE SCALE MRNA]</scope>
    <source>
        <strain>FVB/N</strain>
        <tissue>Mammary tumor</tissue>
    </source>
</reference>
<reference key="4">
    <citation type="journal article" date="2010" name="Cell">
        <title>A tissue-specific atlas of mouse protein phosphorylation and expression.</title>
        <authorList>
            <person name="Huttlin E.L."/>
            <person name="Jedrychowski M.P."/>
            <person name="Elias J.E."/>
            <person name="Goswami T."/>
            <person name="Rad R."/>
            <person name="Beausoleil S.A."/>
            <person name="Villen J."/>
            <person name="Haas W."/>
            <person name="Sowa M.E."/>
            <person name="Gygi S.P."/>
        </authorList>
    </citation>
    <scope>IDENTIFICATION BY MASS SPECTROMETRY [LARGE SCALE ANALYSIS]</scope>
    <source>
        <tissue>Brain</tissue>
        <tissue>Testis</tissue>
    </source>
</reference>
<reference key="5">
    <citation type="journal article" date="2015" name="Hum. Mol. Genet.">
        <title>Conditional depletion of intellectual disability and Parkinsonism candidate gene ATP6AP2 in fly and mouse induces cognitive impairment and neurodegeneration.</title>
        <authorList>
            <person name="Dubos A."/>
            <person name="Castells-Nobau A."/>
            <person name="Meziane H."/>
            <person name="Oortveld M.A."/>
            <person name="Houbaert X."/>
            <person name="Iacono G."/>
            <person name="Martin C."/>
            <person name="Mittelhaeuser C."/>
            <person name="Lalanne V."/>
            <person name="Kramer J.M."/>
            <person name="Bhukel A."/>
            <person name="Quentin C."/>
            <person name="Slabbert J."/>
            <person name="Verstreken P."/>
            <person name="Sigrist S.J."/>
            <person name="Messaddeq N."/>
            <person name="Birling M.C."/>
            <person name="Selloum M."/>
            <person name="Stunnenberg H.G."/>
            <person name="Humeau Y."/>
            <person name="Schenck A."/>
            <person name="Herault Y."/>
        </authorList>
    </citation>
    <scope>FUNCTION</scope>
    <scope>SUBCELLULAR LOCATION</scope>
    <scope>TISSUE SPECIFICITY</scope>
    <scope>DISRUPTION PHENOTYPE</scope>
</reference>
<reference key="6">
    <citation type="journal article" date="2017" name="J. Exp. Med.">
        <title>Mutations in the X-linked ATP6AP2 cause a glycosylation disorder with autophagic defects.</title>
        <authorList>
            <person name="Rujano M.A."/>
            <person name="Cannata Serio M."/>
            <person name="Panasyuk G."/>
            <person name="Peanne R."/>
            <person name="Reunert J."/>
            <person name="Rymen D."/>
            <person name="Hauser V."/>
            <person name="Park J.H."/>
            <person name="Freisinger P."/>
            <person name="Souche E."/>
            <person name="Guida M.C."/>
            <person name="Maier E.M."/>
            <person name="Wada Y."/>
            <person name="Jaeger S."/>
            <person name="Krogan N.J."/>
            <person name="Kretz O."/>
            <person name="Nobre S."/>
            <person name="Garcia P."/>
            <person name="Quelhas D."/>
            <person name="Bird T.D."/>
            <person name="Raskind W.H."/>
            <person name="Schwake M."/>
            <person name="Duvet S."/>
            <person name="Foulquier F."/>
            <person name="Matthijs G."/>
            <person name="Marquardt T."/>
            <person name="Simons M."/>
        </authorList>
    </citation>
    <scope>FUNCTION</scope>
    <scope>DISRUPTION PHENOTYPE</scope>
</reference>
<reference key="7">
    <citation type="journal article" date="2019" name="J. Clin. Invest.">
        <title>ATP6AP2 variant impairs CNS development and neuronal survival to cause fulminant neurodegeneration.</title>
        <authorList>
            <person name="Hirose T."/>
            <person name="Cabrera-Socorro A."/>
            <person name="Chitayat D."/>
            <person name="Lemonnier T."/>
            <person name="Feraud O."/>
            <person name="Cifuentes-Diaz C."/>
            <person name="Gervasi N."/>
            <person name="Mombereau C."/>
            <person name="Ghosh T."/>
            <person name="Stoica L."/>
            <person name="Bacha J.D.A."/>
            <person name="Yamada H."/>
            <person name="Lauterbach M.A."/>
            <person name="Guillon M."/>
            <person name="Kaneko K."/>
            <person name="Norris J.W."/>
            <person name="Siriwardena K."/>
            <person name="Blaser S."/>
            <person name="Teillon J."/>
            <person name="Mendoza-Londono R."/>
            <person name="Russeau M."/>
            <person name="Hadoux J."/>
            <person name="Ito S."/>
            <person name="Corvol P."/>
            <person name="Matheus M.G."/>
            <person name="Holden K.R."/>
            <person name="Takei K."/>
            <person name="Emiliani V."/>
            <person name="Bennaceur-Griscelli A."/>
            <person name="Schwartz C.E."/>
            <person name="Nguyen G."/>
            <person name="Groszer M."/>
        </authorList>
    </citation>
    <scope>FUNCTION</scope>
    <scope>SUBCELLULAR LOCATION</scope>
    <scope>DEVELOPMENTAL STAGE</scope>
    <scope>DISRUPTION PHENOTYPE</scope>
</reference>
<evidence type="ECO:0000250" key="1">
    <source>
        <dbReference type="UniProtKB" id="O75787"/>
    </source>
</evidence>
<evidence type="ECO:0000250" key="2">
    <source>
        <dbReference type="UniProtKB" id="Q6AXS4"/>
    </source>
</evidence>
<evidence type="ECO:0000255" key="3"/>
<evidence type="ECO:0000269" key="4">
    <source>
    </source>
</evidence>
<evidence type="ECO:0000269" key="5">
    <source>
    </source>
</evidence>
<evidence type="ECO:0000269" key="6">
    <source>
    </source>
</evidence>
<evidence type="ECO:0000305" key="7"/>
<evidence type="ECO:0000312" key="8">
    <source>
        <dbReference type="MGI" id="MGI:1917745"/>
    </source>
</evidence>
<dbReference type="EMBL" id="AK017482">
    <property type="protein sequence ID" value="BAB30766.2"/>
    <property type="molecule type" value="mRNA"/>
</dbReference>
<dbReference type="EMBL" id="AK029405">
    <property type="protein sequence ID" value="BAC26436.1"/>
    <property type="molecule type" value="mRNA"/>
</dbReference>
<dbReference type="EMBL" id="AK076495">
    <property type="protein sequence ID" value="BAC36365.1"/>
    <property type="molecule type" value="mRNA"/>
</dbReference>
<dbReference type="EMBL" id="BX000537">
    <property type="status" value="NOT_ANNOTATED_CDS"/>
    <property type="molecule type" value="Genomic_DNA"/>
</dbReference>
<dbReference type="EMBL" id="BC014706">
    <property type="protein sequence ID" value="AAH14706.1"/>
    <property type="molecule type" value="mRNA"/>
</dbReference>
<dbReference type="CCDS" id="CCDS30023.1"/>
<dbReference type="RefSeq" id="NP_081715.1">
    <property type="nucleotide sequence ID" value="NM_027439.4"/>
</dbReference>
<dbReference type="PDB" id="9BRA">
    <property type="method" value="EM"/>
    <property type="resolution" value="4.30 A"/>
    <property type="chains" value="p=1-350"/>
</dbReference>
<dbReference type="PDB" id="9BRQ">
    <property type="method" value="EM"/>
    <property type="resolution" value="4.30 A"/>
    <property type="chains" value="p=1-350"/>
</dbReference>
<dbReference type="PDB" id="9BRR">
    <property type="method" value="EM"/>
    <property type="resolution" value="4.50 A"/>
    <property type="chains" value="p=1-350"/>
</dbReference>
<dbReference type="PDB" id="9BRS">
    <property type="method" value="EM"/>
    <property type="resolution" value="4.40 A"/>
    <property type="chains" value="p=1-350"/>
</dbReference>
<dbReference type="PDB" id="9BRT">
    <property type="method" value="EM"/>
    <property type="resolution" value="4.30 A"/>
    <property type="chains" value="p=1-350"/>
</dbReference>
<dbReference type="PDB" id="9BRU">
    <property type="method" value="EM"/>
    <property type="resolution" value="4.40 A"/>
    <property type="chains" value="p=1-350"/>
</dbReference>
<dbReference type="PDB" id="9BRY">
    <property type="method" value="EM"/>
    <property type="resolution" value="3.60 A"/>
    <property type="chains" value="p=61-350"/>
</dbReference>
<dbReference type="PDB" id="9BRZ">
    <property type="method" value="EM"/>
    <property type="resolution" value="3.80 A"/>
    <property type="chains" value="p=1-350"/>
</dbReference>
<dbReference type="PDBsum" id="9BRA"/>
<dbReference type="PDBsum" id="9BRQ"/>
<dbReference type="PDBsum" id="9BRR"/>
<dbReference type="PDBsum" id="9BRS"/>
<dbReference type="PDBsum" id="9BRT"/>
<dbReference type="PDBsum" id="9BRU"/>
<dbReference type="PDBsum" id="9BRY"/>
<dbReference type="PDBsum" id="9BRZ"/>
<dbReference type="EMDB" id="EMD-44839"/>
<dbReference type="EMDB" id="EMD-44840"/>
<dbReference type="EMDB" id="EMD-44841"/>
<dbReference type="EMDB" id="EMD-44842"/>
<dbReference type="EMDB" id="EMD-44843"/>
<dbReference type="EMDB" id="EMD-44844"/>
<dbReference type="EMDB" id="EMD-44845"/>
<dbReference type="EMDB" id="EMD-44846"/>
<dbReference type="SMR" id="Q9CYN9"/>
<dbReference type="BioGRID" id="214094">
    <property type="interactions" value="3"/>
</dbReference>
<dbReference type="FunCoup" id="Q9CYN9">
    <property type="interactions" value="1228"/>
</dbReference>
<dbReference type="STRING" id="10090.ENSMUSP00000033313"/>
<dbReference type="iPTMnet" id="Q9CYN9"/>
<dbReference type="PhosphoSitePlus" id="Q9CYN9"/>
<dbReference type="jPOST" id="Q9CYN9"/>
<dbReference type="PaxDb" id="10090-ENSMUSP00000033313"/>
<dbReference type="PeptideAtlas" id="Q9CYN9"/>
<dbReference type="ProteomicsDB" id="253208"/>
<dbReference type="Pumba" id="Q9CYN9"/>
<dbReference type="TopDownProteomics" id="Q9CYN9"/>
<dbReference type="Antibodypedia" id="556">
    <property type="antibodies" value="360 antibodies from 37 providers"/>
</dbReference>
<dbReference type="Ensembl" id="ENSMUST00000033313.3">
    <property type="protein sequence ID" value="ENSMUSP00000033313.3"/>
    <property type="gene ID" value="ENSMUSG00000031007.3"/>
</dbReference>
<dbReference type="GeneID" id="70495"/>
<dbReference type="KEGG" id="mmu:70495"/>
<dbReference type="UCSC" id="uc009sqx.2">
    <property type="organism name" value="mouse"/>
</dbReference>
<dbReference type="AGR" id="MGI:1917745"/>
<dbReference type="CTD" id="10159"/>
<dbReference type="MGI" id="MGI:1917745">
    <property type="gene designation" value="Atp6ap2"/>
</dbReference>
<dbReference type="VEuPathDB" id="HostDB:ENSMUSG00000031007"/>
<dbReference type="eggNOG" id="KOG4737">
    <property type="taxonomic scope" value="Eukaryota"/>
</dbReference>
<dbReference type="GeneTree" id="ENSGT00390000008856"/>
<dbReference type="HOGENOM" id="CLU_065819_0_0_1"/>
<dbReference type="InParanoid" id="Q9CYN9"/>
<dbReference type="OMA" id="QYAVIFN"/>
<dbReference type="OrthoDB" id="7866065at2759"/>
<dbReference type="PhylomeDB" id="Q9CYN9"/>
<dbReference type="TreeFam" id="TF106137"/>
<dbReference type="Reactome" id="R-MMU-2022377">
    <property type="pathway name" value="Metabolism of Angiotensinogen to Angiotensins"/>
</dbReference>
<dbReference type="Reactome" id="R-MMU-6798695">
    <property type="pathway name" value="Neutrophil degranulation"/>
</dbReference>
<dbReference type="BioGRID-ORCS" id="70495">
    <property type="hits" value="20 hits in 76 CRISPR screens"/>
</dbReference>
<dbReference type="CD-CODE" id="CE726F99">
    <property type="entry name" value="Postsynaptic density"/>
</dbReference>
<dbReference type="ChiTaRS" id="Atp6ap2">
    <property type="organism name" value="mouse"/>
</dbReference>
<dbReference type="PRO" id="PR:Q9CYN9"/>
<dbReference type="Proteomes" id="UP000000589">
    <property type="component" value="Chromosome X"/>
</dbReference>
<dbReference type="RNAct" id="Q9CYN9">
    <property type="molecule type" value="protein"/>
</dbReference>
<dbReference type="Bgee" id="ENSMUSG00000031007">
    <property type="expression patterns" value="Expressed in choroid plexus epithelium and 254 other cell types or tissues"/>
</dbReference>
<dbReference type="ExpressionAtlas" id="Q9CYN9">
    <property type="expression patterns" value="baseline and differential"/>
</dbReference>
<dbReference type="GO" id="GO:0000421">
    <property type="term" value="C:autophagosome membrane"/>
    <property type="evidence" value="ECO:0007669"/>
    <property type="project" value="UniProtKB-SubCell"/>
</dbReference>
<dbReference type="GO" id="GO:0030424">
    <property type="term" value="C:axon"/>
    <property type="evidence" value="ECO:0007669"/>
    <property type="project" value="UniProtKB-SubCell"/>
</dbReference>
<dbReference type="GO" id="GO:0030665">
    <property type="term" value="C:clathrin-coated vesicle membrane"/>
    <property type="evidence" value="ECO:0007669"/>
    <property type="project" value="UniProtKB-SubCell"/>
</dbReference>
<dbReference type="GO" id="GO:0032591">
    <property type="term" value="C:dendritic spine membrane"/>
    <property type="evidence" value="ECO:0007669"/>
    <property type="project" value="UniProtKB-SubCell"/>
</dbReference>
<dbReference type="GO" id="GO:0005789">
    <property type="term" value="C:endoplasmic reticulum membrane"/>
    <property type="evidence" value="ECO:0007669"/>
    <property type="project" value="UniProtKB-SubCell"/>
</dbReference>
<dbReference type="GO" id="GO:0010008">
    <property type="term" value="C:endosome membrane"/>
    <property type="evidence" value="ECO:0000314"/>
    <property type="project" value="UniProtKB"/>
</dbReference>
<dbReference type="GO" id="GO:0009897">
    <property type="term" value="C:external side of plasma membrane"/>
    <property type="evidence" value="ECO:0007669"/>
    <property type="project" value="Ensembl"/>
</dbReference>
<dbReference type="GO" id="GO:0005765">
    <property type="term" value="C:lysosomal membrane"/>
    <property type="evidence" value="ECO:0000314"/>
    <property type="project" value="UniProtKB"/>
</dbReference>
<dbReference type="GO" id="GO:0045211">
    <property type="term" value="C:postsynaptic membrane"/>
    <property type="evidence" value="ECO:0007669"/>
    <property type="project" value="UniProtKB-KW"/>
</dbReference>
<dbReference type="GO" id="GO:0030672">
    <property type="term" value="C:synaptic vesicle membrane"/>
    <property type="evidence" value="ECO:0007669"/>
    <property type="project" value="UniProtKB-SubCell"/>
</dbReference>
<dbReference type="GO" id="GO:0000220">
    <property type="term" value="C:vacuolar proton-transporting V-type ATPase, V0 domain"/>
    <property type="evidence" value="ECO:0000250"/>
    <property type="project" value="UniProtKB"/>
</dbReference>
<dbReference type="GO" id="GO:0038023">
    <property type="term" value="F:signaling receptor activity"/>
    <property type="evidence" value="ECO:0007669"/>
    <property type="project" value="InterPro"/>
</dbReference>
<dbReference type="GO" id="GO:0002003">
    <property type="term" value="P:angiotensin maturation"/>
    <property type="evidence" value="ECO:0007669"/>
    <property type="project" value="Ensembl"/>
</dbReference>
<dbReference type="GO" id="GO:0021626">
    <property type="term" value="P:central nervous system maturation"/>
    <property type="evidence" value="ECO:0000315"/>
    <property type="project" value="UniProtKB"/>
</dbReference>
<dbReference type="GO" id="GO:0048069">
    <property type="term" value="P:eye pigmentation"/>
    <property type="evidence" value="ECO:0007669"/>
    <property type="project" value="Ensembl"/>
</dbReference>
<dbReference type="GO" id="GO:0060323">
    <property type="term" value="P:head morphogenesis"/>
    <property type="evidence" value="ECO:0007669"/>
    <property type="project" value="Ensembl"/>
</dbReference>
<dbReference type="GO" id="GO:0007042">
    <property type="term" value="P:lysosomal lumen acidification"/>
    <property type="evidence" value="ECO:0000250"/>
    <property type="project" value="UniProtKB"/>
</dbReference>
<dbReference type="GO" id="GO:0090263">
    <property type="term" value="P:positive regulation of canonical Wnt signaling pathway"/>
    <property type="evidence" value="ECO:0000250"/>
    <property type="project" value="UniProtKB"/>
</dbReference>
<dbReference type="GO" id="GO:0032914">
    <property type="term" value="P:positive regulation of transforming growth factor beta1 production"/>
    <property type="evidence" value="ECO:0007669"/>
    <property type="project" value="Ensembl"/>
</dbReference>
<dbReference type="GO" id="GO:0030177">
    <property type="term" value="P:positive regulation of Wnt signaling pathway"/>
    <property type="evidence" value="ECO:0000315"/>
    <property type="project" value="UniProtKB"/>
</dbReference>
<dbReference type="GO" id="GO:0043408">
    <property type="term" value="P:regulation of MAPK cascade"/>
    <property type="evidence" value="ECO:0007669"/>
    <property type="project" value="Ensembl"/>
</dbReference>
<dbReference type="GO" id="GO:0021903">
    <property type="term" value="P:rostrocaudal neural tube patterning"/>
    <property type="evidence" value="ECO:0007669"/>
    <property type="project" value="Ensembl"/>
</dbReference>
<dbReference type="GO" id="GO:0097401">
    <property type="term" value="P:synaptic vesicle lumen acidification"/>
    <property type="evidence" value="ECO:0000314"/>
    <property type="project" value="SynGO"/>
</dbReference>
<dbReference type="InterPro" id="IPR056780">
    <property type="entry name" value="Renin_r_C"/>
</dbReference>
<dbReference type="InterPro" id="IPR012493">
    <property type="entry name" value="Renin_rcpt"/>
</dbReference>
<dbReference type="PANTHER" id="PTHR13351">
    <property type="entry name" value="RENIN RECEPTOR"/>
    <property type="match status" value="1"/>
</dbReference>
<dbReference type="PANTHER" id="PTHR13351:SF1">
    <property type="entry name" value="RENIN RECEPTOR"/>
    <property type="match status" value="1"/>
</dbReference>
<dbReference type="Pfam" id="PF07850">
    <property type="entry name" value="Renin_r"/>
    <property type="match status" value="1"/>
</dbReference>
<dbReference type="Pfam" id="PF25294">
    <property type="entry name" value="RENR_N"/>
    <property type="match status" value="1"/>
</dbReference>
<proteinExistence type="evidence at protein level"/>
<comment type="function">
    <text evidence="1 4 5 6">Multifunctional protein which functions as a renin, prorenin cellular receptor and is involved in the assembly of the lysosomal proton-transporting V-type ATPase (V-ATPase) and the acidification of the endo-lysosomal system (By similarity). May mediate renin-dependent cellular responses by activating ERK1 and ERK2 (By similarity). By increasing the catalytic efficiency of renin in AGT/angiotensinogen conversion to angiotensin I, may also play a role in the renin-angiotensin system (RAS) (By similarity). Through its function in V-type ATPase (v-ATPase) assembly and acidification of the lysosome it regulates protein degradation and may control different signaling pathways important for proper brain development, synapse morphology and synaptic transmission (PubMed:26376863, PubMed:29127204, PubMed:30985297).</text>
</comment>
<comment type="subunit">
    <text evidence="1">Interacts with renin. Accessory component of the multisubunit proton-transporting vacuolar (V)-ATPase protein pump. Interacts (via N-terminus) with ATP6AP1 (via N-terminus). Interacts with ATP6V0D1; ATP6V0D1 is a V-ATPase complex subunit and the interaction promotes V-ATPase complex assembly. Interacts with TMEM9; TMEM9 is a V-ATPase assembly regulator and the interaction induces the interaction with ATP6V0D1. Interacts with VMA21 (via N-terminus); VMA21 is a V-ATPase accessory component.</text>
</comment>
<comment type="subcellular location">
    <subcellularLocation>
        <location evidence="4">Endoplasmic reticulum membrane</location>
        <topology evidence="7">Single-pass type I membrane protein</topology>
    </subcellularLocation>
    <subcellularLocation>
        <location evidence="4 6">Lysosome membrane</location>
        <topology evidence="7">Single-pass type I membrane protein</topology>
    </subcellularLocation>
    <subcellularLocation>
        <location evidence="4">Cytoplasmic vesicle</location>
        <location evidence="4">Autophagosome membrane</location>
        <topology evidence="7">Single-pass type I membrane protein</topology>
    </subcellularLocation>
    <subcellularLocation>
        <location evidence="4">Cell projection</location>
        <location evidence="4">Dendritic spine membrane</location>
        <topology evidence="7">Single-pass type I membrane protein</topology>
    </subcellularLocation>
    <subcellularLocation>
        <location evidence="4">Cell projection</location>
        <location evidence="4">Axon</location>
    </subcellularLocation>
    <subcellularLocation>
        <location evidence="6">Endosome membrane</location>
        <topology evidence="7">Single-pass type I membrane protein</topology>
    </subcellularLocation>
    <subcellularLocation>
        <location evidence="2">Cytoplasmic vesicle</location>
        <location evidence="2">Clathrin-coated vesicle membrane</location>
        <topology evidence="7">Single-pass type I membrane protein</topology>
    </subcellularLocation>
    <subcellularLocation>
        <location evidence="2">Cytoplasmic vesicle</location>
        <location evidence="2">Secretory vesicle</location>
        <location evidence="2">Synaptic vesicle membrane</location>
        <topology evidence="7">Single-pass type I membrane protein</topology>
    </subcellularLocation>
</comment>
<comment type="tissue specificity">
    <text evidence="4">Expressed in glutamatergic and GABAergic neurons with highest levels in the cortex, the hippocampus, the medial habenular nucleus, the cerebellum, the medulla and the olfactory bulb (at protein level).</text>
</comment>
<comment type="developmental stage">
    <text evidence="6">Expressed at 12 dpc throughout the developing cortex with notable apical enrichment in radial glial cells (RGCs) along the ventricular surface.</text>
</comment>
<comment type="PTM">
    <text evidence="1">Phosphorylated.</text>
</comment>
<comment type="PTM">
    <text evidence="1">Proteolytically cleaved by a furin-like convertase in the trans-Golgi network to generate N- and C-terminal fragments.</text>
</comment>
<comment type="disruption phenotype">
    <text evidence="4 5 6">Conditional knockout mice lacking Atp6ap2 in glutamatergic neurons display increased spontaneous locomotor activity and altered fear memory; show abnormal number and morphology of synapses, presynaptic transmission and autophagy defects that lead to axonal and neuronal degeneration in the cortex and hippocampus (PubMed:26376863). Conditional knockout mice lacking Atp6ap2 in the liver display liver damage, hypoglycosylation of serum proteins and autophagy defects (PubMed:26376863, PubMed:29127204). Conditional knockout mice lacking Atp6ap2 in cortical neurons die around 4 weeks of age (PubMed:30985297). It is associated with a flattened forehead and deficits in neural cell generation and/or survival compared to controls. Mutant embryonic cortex shows reduced proliferation of progenitor neural cells with premature exit of the cell cycle, premature differentiation, and apoptosis. There is also evidence of lysosomal dysfunction, impaired protein degradation in autophagolysosomes, and dysregulation of the mTOR kinase pathway.</text>
</comment>
<accession>Q9CYN9</accession>
<accession>A2BDN5</accession>
<accession>Q8BVU6</accession>
<accession>Q91YU5</accession>
<organism>
    <name type="scientific">Mus musculus</name>
    <name type="common">Mouse</name>
    <dbReference type="NCBI Taxonomy" id="10090"/>
    <lineage>
        <taxon>Eukaryota</taxon>
        <taxon>Metazoa</taxon>
        <taxon>Chordata</taxon>
        <taxon>Craniata</taxon>
        <taxon>Vertebrata</taxon>
        <taxon>Euteleostomi</taxon>
        <taxon>Mammalia</taxon>
        <taxon>Eutheria</taxon>
        <taxon>Euarchontoglires</taxon>
        <taxon>Glires</taxon>
        <taxon>Rodentia</taxon>
        <taxon>Myomorpha</taxon>
        <taxon>Muroidea</taxon>
        <taxon>Muridae</taxon>
        <taxon>Murinae</taxon>
        <taxon>Mus</taxon>
        <taxon>Mus</taxon>
    </lineage>
</organism>
<protein>
    <recommendedName>
        <fullName>Renin receptor</fullName>
    </recommendedName>
    <alternativeName>
        <fullName>ATPase H(+)-transporting lysosomal accessory protein 2</fullName>
    </alternativeName>
    <alternativeName>
        <fullName>ATPase H(+)-transporting lysosomal-interacting protein 2</fullName>
    </alternativeName>
    <alternativeName>
        <fullName>Renin/prorenin receptor</fullName>
    </alternativeName>
    <component>
        <recommendedName>
            <fullName evidence="7">Renin receptor extracellular fragment</fullName>
        </recommendedName>
    </component>
    <component>
        <recommendedName>
            <fullName evidence="7">Renin receptor cytoplasmic fragment</fullName>
        </recommendedName>
    </component>
</protein>
<sequence>MAVLVVLLFFLVAGALGNEFSILRSPGSVVFRNGNWPIPGDRIPDVAALSMGFSVKEDLSWPGLAVGNLFHRPRATIMVMVKGVDKLALPAGSVISYPLENAVPFSLDSVANSIHSLFSEETPVVLQLAPSEERVYMVGKANSVFEDLSVTLRQLRNRLFQENSLLNSLPLNSLSRNNEVDLLFLSELQVLHDISSLLSRHKHLAKDHSPDLYSLELAGLDELGKRYGEDSEQFRDASKILVDALQKFADDMYSLYGGNAVVELVTVKSFDTSLVRKSRTILEAKQENTQSPYNLAYKYNLEYSVVFNLVLWIMIGLALAVIITSYNIWNMDPGYDSIIYRMTNQKIRID</sequence>